<keyword id="KW-0966">Cell projection</keyword>
<keyword id="KW-0175">Coiled coil</keyword>
<keyword id="KW-0963">Cytoplasm</keyword>
<keyword id="KW-0333">Golgi apparatus</keyword>
<keyword id="KW-0472">Membrane</keyword>
<keyword id="KW-0653">Protein transport</keyword>
<keyword id="KW-1185">Reference proteome</keyword>
<keyword id="KW-0770">Synapse</keyword>
<keyword id="KW-0813">Transport</keyword>
<dbReference type="EMBL" id="CR858086">
    <property type="protein sequence ID" value="CAH90325.1"/>
    <property type="molecule type" value="mRNA"/>
</dbReference>
<dbReference type="RefSeq" id="NP_001125151.1">
    <property type="nucleotide sequence ID" value="NM_001131679.1"/>
</dbReference>
<dbReference type="BMRB" id="Q5RD32"/>
<dbReference type="SMR" id="Q5RD32"/>
<dbReference type="FunCoup" id="Q5RD32">
    <property type="interactions" value="3350"/>
</dbReference>
<dbReference type="STRING" id="9601.ENSPPYP00000018990"/>
<dbReference type="GeneID" id="100172038"/>
<dbReference type="KEGG" id="pon:100172038"/>
<dbReference type="CTD" id="57120"/>
<dbReference type="eggNOG" id="KOG3528">
    <property type="taxonomic scope" value="Eukaryota"/>
</dbReference>
<dbReference type="InParanoid" id="Q5RD32"/>
<dbReference type="OrthoDB" id="10063653at2759"/>
<dbReference type="Proteomes" id="UP000001595">
    <property type="component" value="Unplaced"/>
</dbReference>
<dbReference type="GO" id="GO:0030425">
    <property type="term" value="C:dendrite"/>
    <property type="evidence" value="ECO:0007669"/>
    <property type="project" value="UniProtKB-SubCell"/>
</dbReference>
<dbReference type="GO" id="GO:0000139">
    <property type="term" value="C:Golgi membrane"/>
    <property type="evidence" value="ECO:0007669"/>
    <property type="project" value="UniProtKB-SubCell"/>
</dbReference>
<dbReference type="GO" id="GO:0014069">
    <property type="term" value="C:postsynaptic density"/>
    <property type="evidence" value="ECO:0007669"/>
    <property type="project" value="UniProtKB-SubCell"/>
</dbReference>
<dbReference type="GO" id="GO:0030140">
    <property type="term" value="C:trans-Golgi network transport vesicle"/>
    <property type="evidence" value="ECO:0007669"/>
    <property type="project" value="TreeGrafter"/>
</dbReference>
<dbReference type="GO" id="GO:0044325">
    <property type="term" value="F:transmembrane transporter binding"/>
    <property type="evidence" value="ECO:0007669"/>
    <property type="project" value="TreeGrafter"/>
</dbReference>
<dbReference type="GO" id="GO:2000009">
    <property type="term" value="P:negative regulation of protein localization to cell surface"/>
    <property type="evidence" value="ECO:0007669"/>
    <property type="project" value="TreeGrafter"/>
</dbReference>
<dbReference type="GO" id="GO:0015031">
    <property type="term" value="P:protein transport"/>
    <property type="evidence" value="ECO:0007669"/>
    <property type="project" value="UniProtKB-KW"/>
</dbReference>
<dbReference type="CDD" id="cd06800">
    <property type="entry name" value="PDZ_GOPC-like"/>
    <property type="match status" value="1"/>
</dbReference>
<dbReference type="FunFam" id="2.30.42.10:FF:000067">
    <property type="entry name" value="Golgi-associated PDZ and coiled-coil motif-containing protein-like"/>
    <property type="match status" value="1"/>
</dbReference>
<dbReference type="Gene3D" id="2.30.42.10">
    <property type="match status" value="1"/>
</dbReference>
<dbReference type="InterPro" id="IPR038879">
    <property type="entry name" value="GOPC"/>
</dbReference>
<dbReference type="InterPro" id="IPR001478">
    <property type="entry name" value="PDZ"/>
</dbReference>
<dbReference type="InterPro" id="IPR036034">
    <property type="entry name" value="PDZ_sf"/>
</dbReference>
<dbReference type="PANTHER" id="PTHR16528">
    <property type="entry name" value="GOLGI-ASSOCIATED PDZ AND COILED-COIL MOTIF-CONTAINING"/>
    <property type="match status" value="1"/>
</dbReference>
<dbReference type="PANTHER" id="PTHR16528:SF2">
    <property type="entry name" value="GOLGI-ASSOCIATED PDZ AND COILED-COIL MOTIF-CONTAINING PROTEIN"/>
    <property type="match status" value="1"/>
</dbReference>
<dbReference type="Pfam" id="PF00595">
    <property type="entry name" value="PDZ"/>
    <property type="match status" value="1"/>
</dbReference>
<dbReference type="SMART" id="SM00228">
    <property type="entry name" value="PDZ"/>
    <property type="match status" value="1"/>
</dbReference>
<dbReference type="SUPFAM" id="SSF50156">
    <property type="entry name" value="PDZ domain-like"/>
    <property type="match status" value="1"/>
</dbReference>
<dbReference type="PROSITE" id="PS50106">
    <property type="entry name" value="PDZ"/>
    <property type="match status" value="1"/>
</dbReference>
<organism>
    <name type="scientific">Pongo abelii</name>
    <name type="common">Sumatran orangutan</name>
    <name type="synonym">Pongo pygmaeus abelii</name>
    <dbReference type="NCBI Taxonomy" id="9601"/>
    <lineage>
        <taxon>Eukaryota</taxon>
        <taxon>Metazoa</taxon>
        <taxon>Chordata</taxon>
        <taxon>Craniata</taxon>
        <taxon>Vertebrata</taxon>
        <taxon>Euteleostomi</taxon>
        <taxon>Mammalia</taxon>
        <taxon>Eutheria</taxon>
        <taxon>Euarchontoglires</taxon>
        <taxon>Primates</taxon>
        <taxon>Haplorrhini</taxon>
        <taxon>Catarrhini</taxon>
        <taxon>Hominidae</taxon>
        <taxon>Pongo</taxon>
    </lineage>
</organism>
<evidence type="ECO:0000250" key="1"/>
<evidence type="ECO:0000250" key="2">
    <source>
        <dbReference type="UniProtKB" id="Q8BH60"/>
    </source>
</evidence>
<evidence type="ECO:0000250" key="3">
    <source>
        <dbReference type="UniProtKB" id="Q9HD26"/>
    </source>
</evidence>
<evidence type="ECO:0000255" key="4"/>
<evidence type="ECO:0000255" key="5">
    <source>
        <dbReference type="PROSITE-ProRule" id="PRU00143"/>
    </source>
</evidence>
<evidence type="ECO:0000256" key="6">
    <source>
        <dbReference type="SAM" id="MobiDB-lite"/>
    </source>
</evidence>
<gene>
    <name type="primary">GOPC</name>
    <name evidence="3" type="synonym">CAL</name>
</gene>
<reference key="1">
    <citation type="submission" date="2004-11" db="EMBL/GenBank/DDBJ databases">
        <authorList>
            <consortium name="The German cDNA consortium"/>
        </authorList>
    </citation>
    <scope>NUCLEOTIDE SEQUENCE [LARGE SCALE MRNA]</scope>
    <source>
        <tissue>Brain cortex</tissue>
    </source>
</reference>
<accession>Q5RD32</accession>
<protein>
    <recommendedName>
        <fullName evidence="3">Golgi-associated PDZ and coiled-coil motif-containing protein</fullName>
    </recommendedName>
    <alternativeName>
        <fullName evidence="3">CFTR-associated ligand</fullName>
    </alternativeName>
    <alternativeName>
        <fullName evidence="3">PDZ protein interacting specifically with TC10</fullName>
        <shortName evidence="3">PIST</shortName>
    </alternativeName>
</protein>
<sequence>MAAGGPCPAAAGGGPGGASCSVGAPGGVSMFRWLEVLEKEFDKAFVDVDLLLGEIDPDQADITYEGRQKMTSLSSCFAQLCHKAQSVSQINHKLEAQLVDLKSELTETQAEKVVLEKEVHDQLLQLHSIQLQLHAKTGQSVDSGTIKAKLSGPSVEELERELEANKKEKMKEAQLEAEVKLLRKEDEALRGHIAVLQAEVYGARLAAKYLDKELAGRVQQIQLLGRDMKGPAHDKLWNQLEAEIHLHRHKTVIRACRGRNDLKRPMQAPPGHDQDSLKKSQGVGPIRKVLLLKEDHEGLGISITGGKEHGVPILISEIHPGQPADRCGGLHVGDAILAVDGVNLRDTKHKEAVTVLSQQRGEIEFEVVYVAPEVDSDDENVEYEDESGHRYRLYLDELEGGGNPGASCKDPSGEIKVLQGFNKKAVTDTHENGDLGTASETPLDDGASKLDDLHTLYHKKSY</sequence>
<proteinExistence type="evidence at transcript level"/>
<name>GOPC_PONAB</name>
<feature type="chain" id="PRO_0000087544" description="Golgi-associated PDZ and coiled-coil motif-containing protein">
    <location>
        <begin position="1"/>
        <end position="462"/>
    </location>
</feature>
<feature type="domain" description="PDZ" evidence="5">
    <location>
        <begin position="288"/>
        <end position="371"/>
    </location>
</feature>
<feature type="region of interest" description="Disordered" evidence="6">
    <location>
        <begin position="427"/>
        <end position="449"/>
    </location>
</feature>
<feature type="coiled-coil region" evidence="4">
    <location>
        <begin position="83"/>
        <end position="194"/>
    </location>
</feature>
<comment type="function">
    <text evidence="2 3">Plays a role in intracellular protein trafficking and degradation (By similarity). May regulate CFTR chloride currents and acid-induced ASIC3 currents by modulating cell surface expression of both channels (By similarity). May also regulate the intracellular trafficking of the ADR1B receptor (By similarity). May play a role in autophagy (By similarity). Together with MARCHF2 mediates the ubiquitination and lysosomal degradation of CFTR (By similarity). Overexpression results in CFTR intracellular retention and degradation in the lysosomes (By similarity).</text>
</comment>
<comment type="subunit">
    <text evidence="2 3">Homooligomer (By similarity). Interacts with FZD5 (By similarity). Interacts with FZD8 (By similarity). Interacts with GRID2 and BECN1 (By similarity). Interacts with CSPG5 (By similarity). Interacts with CLCN3 (By similarity). Interacts with STX6 (By similarity). Interacts with CFTR (By similarity). Interacts with ASIC3 (By similarity). Interacts with GOLGA3 (By similarity). Interacts with NLGN1 (By similarity). Interacts with RHOQ (By similarity). Interacts with MARCHF2; the interaction leads to CFTR ubiquitination and degradation (By similarity). May interact with CACNG2 (By similarity). Interacts with CCDC62 (By similarity).</text>
</comment>
<comment type="subcellular location">
    <subcellularLocation>
        <location evidence="1">Cytoplasm</location>
    </subcellularLocation>
    <subcellularLocation>
        <location evidence="1">Golgi apparatus membrane</location>
        <topology evidence="1">Peripheral membrane protein</topology>
    </subcellularLocation>
    <subcellularLocation>
        <location evidence="1">Golgi apparatus</location>
        <location evidence="1">trans-Golgi network membrane</location>
        <topology evidence="1">Peripheral membrane protein</topology>
    </subcellularLocation>
    <subcellularLocation>
        <location evidence="1">Synapse</location>
    </subcellularLocation>
    <subcellularLocation>
        <location evidence="1">Postsynaptic density</location>
    </subcellularLocation>
    <subcellularLocation>
        <location evidence="1">Cell projection</location>
        <location evidence="1">Dendrite</location>
    </subcellularLocation>
    <text evidence="1">Enriched in synaptosomal and postsynaptic densities (PSD) fractions. Expressed in cell bodies and dendrites of Purkinje cells. Localized at the trans-Golgi network (TGN) of spermatids and the medulla of round spermatides (By similarity).</text>
</comment>
<comment type="domain">
    <text evidence="1">The PDZ domain mediates interactions with FZD5, FZD8, ASIC3, GRID2, CFTR, CLCN3 and ADRB1.</text>
</comment>
<comment type="domain">
    <text evidence="1">The coiled-coil region probably mediates association to membranes, targeting to the Golgi, and interactions with GOLGA3, RHOQ, and STX6.</text>
</comment>